<keyword id="KW-0067">ATP-binding</keyword>
<keyword id="KW-0963">Cytoplasm</keyword>
<keyword id="KW-0418">Kinase</keyword>
<keyword id="KW-0547">Nucleotide-binding</keyword>
<keyword id="KW-1185">Reference proteome</keyword>
<keyword id="KW-0808">Transferase</keyword>
<evidence type="ECO:0000250" key="1"/>
<evidence type="ECO:0000255" key="2"/>
<evidence type="ECO:0000269" key="3">
    <source>
    </source>
</evidence>
<evidence type="ECO:0000305" key="4"/>
<organism>
    <name type="scientific">Dictyostelium discoideum</name>
    <name type="common">Social amoeba</name>
    <dbReference type="NCBI Taxonomy" id="44689"/>
    <lineage>
        <taxon>Eukaryota</taxon>
        <taxon>Amoebozoa</taxon>
        <taxon>Evosea</taxon>
        <taxon>Eumycetozoa</taxon>
        <taxon>Dictyostelia</taxon>
        <taxon>Dictyosteliales</taxon>
        <taxon>Dictyosteliaceae</taxon>
        <taxon>Dictyostelium</taxon>
    </lineage>
</organism>
<accession>Q54UT2</accession>
<accession>Q14EL5</accession>
<feature type="chain" id="PRO_0000327522" description="Deoxyguanosine kinase">
    <location>
        <begin position="1"/>
        <end position="285"/>
    </location>
</feature>
<feature type="active site" description="Proton acceptor" evidence="2">
    <location>
        <position position="114"/>
    </location>
</feature>
<feature type="binding site" evidence="1">
    <location>
        <begin position="39"/>
        <end position="47"/>
    </location>
    <ligand>
        <name>ATP</name>
        <dbReference type="ChEBI" id="CHEBI:30616"/>
    </ligand>
</feature>
<feature type="binding site" evidence="1">
    <location>
        <position position="63"/>
    </location>
    <ligand>
        <name>substrate</name>
    </ligand>
</feature>
<feature type="binding site" evidence="1">
    <location>
        <position position="75"/>
    </location>
    <ligand>
        <name>substrate</name>
    </ligand>
</feature>
<feature type="binding site" evidence="1">
    <location>
        <position position="86"/>
    </location>
    <ligand>
        <name>substrate</name>
    </ligand>
</feature>
<feature type="binding site" evidence="1">
    <location>
        <position position="115"/>
    </location>
    <ligand>
        <name>substrate</name>
    </ligand>
</feature>
<feature type="binding site" evidence="1">
    <location>
        <position position="120"/>
    </location>
    <ligand>
        <name>substrate</name>
    </ligand>
</feature>
<feature type="binding site" evidence="1">
    <location>
        <position position="180"/>
    </location>
    <ligand>
        <name>substrate</name>
    </ligand>
</feature>
<protein>
    <recommendedName>
        <fullName>Deoxyguanosine kinase</fullName>
        <shortName>dGK</shortName>
        <ecNumber>2.7.1.113</ecNumber>
    </recommendedName>
    <alternativeName>
        <fullName>DddGK</fullName>
    </alternativeName>
</protein>
<gene>
    <name type="primary">dgk</name>
    <name type="ORF">DDB_G0280843</name>
</gene>
<reference key="1">
    <citation type="journal article" date="2007" name="J. Mol. Biol.">
        <title>Dictyostelium discoideum salvages purine deoxyribonucleosides by highly specific bacterial-like deoxyribonucleoside kinases.</title>
        <authorList>
            <person name="Sandrini M.P.B."/>
            <person name="Soederbom F."/>
            <person name="Mikkelsen N.E."/>
            <person name="Piskur J."/>
        </authorList>
    </citation>
    <scope>NUCLEOTIDE SEQUENCE [MRNA]</scope>
    <scope>CATALYTIC ACTIVITY</scope>
    <scope>BIOPHYSICOCHEMICAL PROPERTIES</scope>
    <source>
        <strain>AX4</strain>
    </source>
</reference>
<reference key="2">
    <citation type="journal article" date="2005" name="Nature">
        <title>The genome of the social amoeba Dictyostelium discoideum.</title>
        <authorList>
            <person name="Eichinger L."/>
            <person name="Pachebat J.A."/>
            <person name="Gloeckner G."/>
            <person name="Rajandream M.A."/>
            <person name="Sucgang R."/>
            <person name="Berriman M."/>
            <person name="Song J."/>
            <person name="Olsen R."/>
            <person name="Szafranski K."/>
            <person name="Xu Q."/>
            <person name="Tunggal B."/>
            <person name="Kummerfeld S."/>
            <person name="Madera M."/>
            <person name="Konfortov B.A."/>
            <person name="Rivero F."/>
            <person name="Bankier A.T."/>
            <person name="Lehmann R."/>
            <person name="Hamlin N."/>
            <person name="Davies R."/>
            <person name="Gaudet P."/>
            <person name="Fey P."/>
            <person name="Pilcher K."/>
            <person name="Chen G."/>
            <person name="Saunders D."/>
            <person name="Sodergren E.J."/>
            <person name="Davis P."/>
            <person name="Kerhornou A."/>
            <person name="Nie X."/>
            <person name="Hall N."/>
            <person name="Anjard C."/>
            <person name="Hemphill L."/>
            <person name="Bason N."/>
            <person name="Farbrother P."/>
            <person name="Desany B."/>
            <person name="Just E."/>
            <person name="Morio T."/>
            <person name="Rost R."/>
            <person name="Churcher C.M."/>
            <person name="Cooper J."/>
            <person name="Haydock S."/>
            <person name="van Driessche N."/>
            <person name="Cronin A."/>
            <person name="Goodhead I."/>
            <person name="Muzny D.M."/>
            <person name="Mourier T."/>
            <person name="Pain A."/>
            <person name="Lu M."/>
            <person name="Harper D."/>
            <person name="Lindsay R."/>
            <person name="Hauser H."/>
            <person name="James K.D."/>
            <person name="Quiles M."/>
            <person name="Madan Babu M."/>
            <person name="Saito T."/>
            <person name="Buchrieser C."/>
            <person name="Wardroper A."/>
            <person name="Felder M."/>
            <person name="Thangavelu M."/>
            <person name="Johnson D."/>
            <person name="Knights A."/>
            <person name="Loulseged H."/>
            <person name="Mungall K.L."/>
            <person name="Oliver K."/>
            <person name="Price C."/>
            <person name="Quail M.A."/>
            <person name="Urushihara H."/>
            <person name="Hernandez J."/>
            <person name="Rabbinowitsch E."/>
            <person name="Steffen D."/>
            <person name="Sanders M."/>
            <person name="Ma J."/>
            <person name="Kohara Y."/>
            <person name="Sharp S."/>
            <person name="Simmonds M.N."/>
            <person name="Spiegler S."/>
            <person name="Tivey A."/>
            <person name="Sugano S."/>
            <person name="White B."/>
            <person name="Walker D."/>
            <person name="Woodward J.R."/>
            <person name="Winckler T."/>
            <person name="Tanaka Y."/>
            <person name="Shaulsky G."/>
            <person name="Schleicher M."/>
            <person name="Weinstock G.M."/>
            <person name="Rosenthal A."/>
            <person name="Cox E.C."/>
            <person name="Chisholm R.L."/>
            <person name="Gibbs R.A."/>
            <person name="Loomis W.F."/>
            <person name="Platzer M."/>
            <person name="Kay R.R."/>
            <person name="Williams J.G."/>
            <person name="Dear P.H."/>
            <person name="Noegel A.A."/>
            <person name="Barrell B.G."/>
            <person name="Kuspa A."/>
        </authorList>
    </citation>
    <scope>NUCLEOTIDE SEQUENCE [LARGE SCALE GENOMIC DNA]</scope>
    <source>
        <strain>AX4</strain>
    </source>
</reference>
<name>DGK_DICDI</name>
<sequence>MFRRSLMFMISNNKNTNMVSSINTTNKVNNFSKIIILEGNISAGKTYLSSKLGDLLGYKVFLEPTATNPYLSLFYKEPSKYALIMQKWLLNQRYNTFLNALQYSLENEQGVILDRSVYSDWVFAENCRSEGLISAEGFKEYNSIRDRFLSNIPIPNVTLFLDVDPKQCLQRIQNRKRDCEQSIPLSYLSGLDNCYKKFLIEMKSKGSNVIILDWNNFGDINLVLNEINNDNFNNFNNSNNSKFNDVNYKKQQLISDIENEKNNLKEMKFFLNENNNNNNQEKIKS</sequence>
<comment type="function">
    <text>Purine-specific deoxyribonucleoside kinase that phosphorylates preferentially deoxyguanosine, as part of the deoxyribonucleotide salvage pathway.</text>
</comment>
<comment type="catalytic activity">
    <reaction evidence="3">
        <text>2'-deoxyguanosine + ATP = dGMP + ADP + H(+)</text>
        <dbReference type="Rhea" id="RHEA:19201"/>
        <dbReference type="ChEBI" id="CHEBI:15378"/>
        <dbReference type="ChEBI" id="CHEBI:17172"/>
        <dbReference type="ChEBI" id="CHEBI:30616"/>
        <dbReference type="ChEBI" id="CHEBI:57673"/>
        <dbReference type="ChEBI" id="CHEBI:456216"/>
        <dbReference type="EC" id="2.7.1.113"/>
    </reaction>
</comment>
<comment type="biophysicochemical properties">
    <kinetics>
        <KM evidence="3">1.4 uM for deoxyguanosine</KM>
        <KM evidence="3">206 uM for deoxyadenosine</KM>
    </kinetics>
</comment>
<comment type="subcellular location">
    <subcellularLocation>
        <location evidence="4">Cytoplasm</location>
    </subcellularLocation>
</comment>
<comment type="similarity">
    <text evidence="4">Belongs to the DCK/DGK family.</text>
</comment>
<dbReference type="EC" id="2.7.1.113"/>
<dbReference type="EMBL" id="AY669384">
    <property type="protein sequence ID" value="AAV85947.1"/>
    <property type="molecule type" value="mRNA"/>
</dbReference>
<dbReference type="EMBL" id="AAFI02000025">
    <property type="protein sequence ID" value="EAL67033.2"/>
    <property type="molecule type" value="Genomic_DNA"/>
</dbReference>
<dbReference type="RefSeq" id="XP_641009.2">
    <property type="nucleotide sequence ID" value="XM_635917.2"/>
</dbReference>
<dbReference type="SMR" id="Q54UT2"/>
<dbReference type="FunCoup" id="Q54UT2">
    <property type="interactions" value="122"/>
</dbReference>
<dbReference type="STRING" id="44689.Q54UT2"/>
<dbReference type="PaxDb" id="44689-DDB0233982"/>
<dbReference type="EnsemblProtists" id="EAL67033">
    <property type="protein sequence ID" value="EAL67033"/>
    <property type="gene ID" value="DDB_G0280843"/>
</dbReference>
<dbReference type="GeneID" id="8621793"/>
<dbReference type="KEGG" id="ddi:DDB_G0280843"/>
<dbReference type="dictyBase" id="DDB_G0280843">
    <property type="gene designation" value="dgk"/>
</dbReference>
<dbReference type="VEuPathDB" id="AmoebaDB:DDB_G0280843"/>
<dbReference type="eggNOG" id="KOG3877">
    <property type="taxonomic scope" value="Eukaryota"/>
</dbReference>
<dbReference type="HOGENOM" id="CLU_050591_0_0_1"/>
<dbReference type="InParanoid" id="Q54UT2"/>
<dbReference type="OMA" id="KYALIMQ"/>
<dbReference type="PhylomeDB" id="Q54UT2"/>
<dbReference type="BRENDA" id="2.7.1.113">
    <property type="organism ID" value="1939"/>
</dbReference>
<dbReference type="SABIO-RK" id="Q54UT2"/>
<dbReference type="PRO" id="PR:Q54UT2"/>
<dbReference type="Proteomes" id="UP000002195">
    <property type="component" value="Chromosome 3"/>
</dbReference>
<dbReference type="GO" id="GO:0005737">
    <property type="term" value="C:cytoplasm"/>
    <property type="evidence" value="ECO:0000318"/>
    <property type="project" value="GO_Central"/>
</dbReference>
<dbReference type="GO" id="GO:0005739">
    <property type="term" value="C:mitochondrion"/>
    <property type="evidence" value="ECO:0007669"/>
    <property type="project" value="GOC"/>
</dbReference>
<dbReference type="GO" id="GO:0045271">
    <property type="term" value="C:respiratory chain complex I"/>
    <property type="evidence" value="ECO:0000318"/>
    <property type="project" value="GO_Central"/>
</dbReference>
<dbReference type="GO" id="GO:0005524">
    <property type="term" value="F:ATP binding"/>
    <property type="evidence" value="ECO:0007669"/>
    <property type="project" value="UniProtKB-KW"/>
</dbReference>
<dbReference type="GO" id="GO:0004138">
    <property type="term" value="F:deoxyguanosine kinase activity"/>
    <property type="evidence" value="ECO:0000314"/>
    <property type="project" value="dictyBase"/>
</dbReference>
<dbReference type="GO" id="GO:0006180">
    <property type="term" value="P:deoxyguanosine salvage"/>
    <property type="evidence" value="ECO:0000314"/>
    <property type="project" value="dictyBase"/>
</dbReference>
<dbReference type="GO" id="GO:0006120">
    <property type="term" value="P:mitochondrial electron transport, NADH to ubiquinone"/>
    <property type="evidence" value="ECO:0000318"/>
    <property type="project" value="GO_Central"/>
</dbReference>
<dbReference type="CDD" id="cd01673">
    <property type="entry name" value="dNK"/>
    <property type="match status" value="1"/>
</dbReference>
<dbReference type="FunFam" id="3.40.50.300:FF:002610">
    <property type="entry name" value="Deoxyguanosine kinase/deoxyadenosine kinase subunit, putative"/>
    <property type="match status" value="1"/>
</dbReference>
<dbReference type="Gene3D" id="3.40.50.300">
    <property type="entry name" value="P-loop containing nucleotide triphosphate hydrolases"/>
    <property type="match status" value="1"/>
</dbReference>
<dbReference type="InterPro" id="IPR002624">
    <property type="entry name" value="DCK/DGK"/>
</dbReference>
<dbReference type="InterPro" id="IPR050566">
    <property type="entry name" value="Deoxyribonucleoside_kinase"/>
</dbReference>
<dbReference type="InterPro" id="IPR031314">
    <property type="entry name" value="DNK_dom"/>
</dbReference>
<dbReference type="InterPro" id="IPR027417">
    <property type="entry name" value="P-loop_NTPase"/>
</dbReference>
<dbReference type="PANTHER" id="PTHR10513">
    <property type="entry name" value="DEOXYNUCLEOSIDE KINASE"/>
    <property type="match status" value="1"/>
</dbReference>
<dbReference type="PANTHER" id="PTHR10513:SF15">
    <property type="entry name" value="NADH DEHYDROGENASE [UBIQUINONE] 1 ALPHA SUBCOMPLEX SUBUNIT 10, MITOCHONDRIAL"/>
    <property type="match status" value="1"/>
</dbReference>
<dbReference type="Pfam" id="PF01712">
    <property type="entry name" value="dNK"/>
    <property type="match status" value="1"/>
</dbReference>
<dbReference type="PIRSF" id="PIRSF000705">
    <property type="entry name" value="DNK"/>
    <property type="match status" value="1"/>
</dbReference>
<dbReference type="SUPFAM" id="SSF52540">
    <property type="entry name" value="P-loop containing nucleoside triphosphate hydrolases"/>
    <property type="match status" value="1"/>
</dbReference>
<proteinExistence type="evidence at protein level"/>